<proteinExistence type="evidence at protein level"/>
<evidence type="ECO:0000250" key="1">
    <source>
        <dbReference type="UniProtKB" id="Q0VGT2"/>
    </source>
</evidence>
<evidence type="ECO:0000255" key="2">
    <source>
        <dbReference type="PROSITE-ProRule" id="PRU00042"/>
    </source>
</evidence>
<evidence type="ECO:0000256" key="3">
    <source>
        <dbReference type="SAM" id="MobiDB-lite"/>
    </source>
</evidence>
<evidence type="ECO:0000269" key="4">
    <source>
    </source>
</evidence>
<evidence type="ECO:0000269" key="5">
    <source>
    </source>
</evidence>
<evidence type="ECO:0000269" key="6">
    <source>
    </source>
</evidence>
<evidence type="ECO:0000269" key="7">
    <source>
    </source>
</evidence>
<evidence type="ECO:0000269" key="8">
    <source>
    </source>
</evidence>
<evidence type="ECO:0000269" key="9">
    <source>
    </source>
</evidence>
<evidence type="ECO:0000269" key="10">
    <source>
    </source>
</evidence>
<evidence type="ECO:0000269" key="11">
    <source>
    </source>
</evidence>
<evidence type="ECO:0000269" key="12">
    <source>
    </source>
</evidence>
<evidence type="ECO:0000269" key="13">
    <source>
    </source>
</evidence>
<evidence type="ECO:0000269" key="14">
    <source>
    </source>
</evidence>
<evidence type="ECO:0000269" key="15">
    <source>
    </source>
</evidence>
<evidence type="ECO:0000269" key="16">
    <source>
    </source>
</evidence>
<evidence type="ECO:0000269" key="17">
    <source>
    </source>
</evidence>
<evidence type="ECO:0000303" key="18">
    <source>
    </source>
</evidence>
<evidence type="ECO:0000303" key="19">
    <source>
    </source>
</evidence>
<evidence type="ECO:0000303" key="20">
    <source>
    </source>
</evidence>
<evidence type="ECO:0000305" key="21"/>
<evidence type="ECO:0000305" key="22">
    <source>
    </source>
</evidence>
<evidence type="ECO:0000312" key="23">
    <source>
        <dbReference type="HGNC" id="HGNC:4318"/>
    </source>
</evidence>
<evidence type="ECO:0007744" key="24">
    <source>
    </source>
</evidence>
<evidence type="ECO:0007744" key="25">
    <source>
    </source>
</evidence>
<evidence type="ECO:0007744" key="26">
    <source>
    </source>
</evidence>
<name>GLI2_HUMAN</name>
<organism>
    <name type="scientific">Homo sapiens</name>
    <name type="common">Human</name>
    <dbReference type="NCBI Taxonomy" id="9606"/>
    <lineage>
        <taxon>Eukaryota</taxon>
        <taxon>Metazoa</taxon>
        <taxon>Chordata</taxon>
        <taxon>Craniata</taxon>
        <taxon>Vertebrata</taxon>
        <taxon>Euteleostomi</taxon>
        <taxon>Mammalia</taxon>
        <taxon>Eutheria</taxon>
        <taxon>Euarchontoglires</taxon>
        <taxon>Primates</taxon>
        <taxon>Haplorrhini</taxon>
        <taxon>Catarrhini</taxon>
        <taxon>Hominidae</taxon>
        <taxon>Homo</taxon>
    </lineage>
</organism>
<comment type="function">
    <text evidence="1 6 8 9 13 14 17 22">Functions as a transcription regulator in the hedgehog (Hh) pathway (PubMed:18455992, PubMed:26565916). Functions as a transcriptional activator (PubMed:19878745, PubMed:24311597, PubMed:9557682). May also function as transcriptional repressor (By similarity). Requires STK36 for full transcriptional activator activity. Required for normal embryonic development (PubMed:15994174, PubMed:20685856).</text>
</comment>
<comment type="function">
    <molecule>Isoform 1</molecule>
    <text evidence="8">Involved in the smoothened (SHH) signaling pathway.</text>
</comment>
<comment type="function">
    <molecule>Isoform 2</molecule>
    <text evidence="8">Involved in the smoothened (SHH) signaling pathway.</text>
</comment>
<comment type="function">
    <molecule>Isoform 3</molecule>
    <text evidence="8">Involved in the smoothened (SHH) signaling pathway.</text>
</comment>
<comment type="function">
    <molecule>Isoform 4</molecule>
    <text evidence="8">Involved in the smoothened (SHH) signaling pathway.</text>
</comment>
<comment type="function">
    <molecule>Isoform 1</molecule>
    <text evidence="6 17">Acts as a transcriptional activator in T-cell leukemia virus type 1 (HTLV-1)-infected cells in a Tax-dependent manner. Binds to the DNA sequence 5'-GAACCACCCA-3' which is part of the Tax-responsive element (TRE-2S) regulatory element that augments the Tax-dependent enhancer of HTLV-1 (PubMed:9557682).</text>
</comment>
<comment type="function">
    <molecule>Isoform 2</molecule>
    <text evidence="6 17">(Microbial infection) Acts as a transcriptional activators in T-cell leukemia virus type 1 (HTLV-1)-infected cells in a Tax-dependent manner. Binds to the DNA sequence 5'-GAACCACCCA-3' which is part of the Tax-responsive element (TRE-2S) regulatory element that augments the Tax-dependent enhancer of HTLV-1 (PubMed:9557682).</text>
</comment>
<comment type="function">
    <molecule>Isoform 3</molecule>
    <text evidence="6 17">(Microbial infection) Acts as a transcriptional activators in T-cell leukemia virus type 1 (HTLV-1)-infected cells in a Tax-dependent manner. Binds to the DNA sequence 5'-GAACCACCCA-3' which is part of the Tax-responsive element (TRE-2S) regulatory element that augments the Tax-dependent enhancer of HTLV-1 (PubMed:9557682).</text>
</comment>
<comment type="function">
    <molecule>Isoform 4</molecule>
    <text evidence="6 17">(Microbial infection) Acts as a transcriptional activators in T-cell leukemia virus type 1 (HTLV-1)-infected cells in a Tax-dependent manner. Binds to the DNA sequence 5'-GAACCACCCA-3' which is part of the Tax-responsive element (TRE-2S) regulatory element that augments the Tax-dependent enhancer of HTLV-1 (PubMed:9557682).</text>
</comment>
<comment type="function">
    <molecule>Isoform 5</molecule>
    <text evidence="6">Acts as a transcriptional repressor.</text>
</comment>
<comment type="subunit">
    <text evidence="1 4 13 14">Interaction with ZIC1 and ZIC2 (By similarity). Interacts with STK36 (PubMed:10806483). Interacts with SUFU; this inhibits transcriptional activation mediated by GLI2 (PubMed:24311597). Interacts (via C-terminal internal region) with FOXC1 (via N-terminus); this interaction is direct and increases GLI2 DNA-binding and transcriptional activity through a smoothened (SMO)-independent Hedgehog (Hh) signaling pathway (PubMed:26565916).</text>
</comment>
<comment type="interaction">
    <interactant intactId="EBI-10821567">
        <id>P10070</id>
    </interactant>
    <interactant intactId="EBI-307461">
        <id>Q9Y297</id>
        <label>BTRC</label>
    </interactant>
    <organismsDiffer>false</organismsDiffer>
    <experiments>4</experiments>
</comment>
<comment type="interaction">
    <interactant intactId="EBI-10821567">
        <id>P10070</id>
    </interactant>
    <interactant intactId="EBI-347161">
        <id>P84022</id>
        <label>SMAD3</label>
    </interactant>
    <organismsDiffer>false</organismsDiffer>
    <experiments>4</experiments>
</comment>
<comment type="interaction">
    <interactant intactId="EBI-10821567">
        <id>P10070</id>
    </interactant>
    <interactant intactId="EBI-346882">
        <id>Q99816</id>
        <label>TSG101</label>
    </interactant>
    <organismsDiffer>false</organismsDiffer>
    <experiments>2</experiments>
</comment>
<comment type="subcellular location">
    <subcellularLocation>
        <location evidence="14">Nucleus</location>
    </subcellularLocation>
    <subcellularLocation>
        <location evidence="1">Cytoplasm</location>
    </subcellularLocation>
    <subcellularLocation>
        <location evidence="1">Cell projection</location>
        <location evidence="1">Cilium</location>
    </subcellularLocation>
    <text evidence="1">STK36 promotes translocation to the nucleus. In keratinocytes, it is sequestered in the cytoplasm by SUFU. In the absence of SUFU, it translocates to the nucleus.</text>
</comment>
<comment type="subcellular location">
    <molecule>Isoform 1</molecule>
    <subcellularLocation>
        <location evidence="17">Nucleus</location>
    </subcellularLocation>
</comment>
<comment type="subcellular location">
    <molecule>Isoform 2</molecule>
    <subcellularLocation>
        <location evidence="17">Nucleus</location>
    </subcellularLocation>
</comment>
<comment type="alternative products">
    <event type="alternative splicing"/>
    <isoform>
        <id>P10070-5</id>
        <name>5</name>
        <name evidence="18">GLI2</name>
        <sequence type="displayed"/>
    </isoform>
    <isoform>
        <id>P10070-1</id>
        <name>1</name>
        <name>Alpha</name>
        <name>GLI2star</name>
        <name evidence="18 20">GLI2deltaN</name>
        <sequence type="described" ref="VSP_035708"/>
    </isoform>
    <isoform>
        <id>P10070-2</id>
        <name>2</name>
        <name evidence="20">Beta</name>
        <sequence type="described" ref="VSP_035708 VSP_006877"/>
    </isoform>
    <isoform>
        <id>P10070-3</id>
        <name>3</name>
        <name evidence="20">Gamma</name>
        <sequence type="described" ref="VSP_035708 VSP_006878 VSP_006879"/>
    </isoform>
    <isoform>
        <id>P10070-4</id>
        <name>4</name>
        <name evidence="20">Delta</name>
        <sequence type="described" ref="VSP_035708 VSP_006877 VSP_006878 VSP_006879"/>
    </isoform>
</comment>
<comment type="tissue specificity">
    <text evidence="14 17">Expressed in breast cancers (at protein level) (PubMed:26565916). Isoform 1 and isoform 4 are expressed in HTLV-1-infected T-cell lines (at protein level) (PubMed:9557682). Isoform 1 and isoform 2 are strongly expressed in HTLV-1-infected T-cell lines (PubMed:9557682). Isoform 3 and isoform 4 are weakly expressed in HTLV-1-infected T-cell lines (PubMed:9557682).</text>
</comment>
<comment type="domain">
    <text evidence="1">The N-terminal domain confers transcriptional repressor activity, while the C-terminal domain mediates transcriptional activation.</text>
</comment>
<comment type="PTM">
    <text evidence="8 9">Phosphorylated in vitro by ULK3. Phosphorylated by DYRK2; this inhibits GLI2 transcription factor activity and promotes proteasomal degradation of GLI2.</text>
</comment>
<comment type="PTM">
    <text evidence="12">Acetylation at Lys-757 inhibits Hh target gene expression, probably by impeding entry into chromatin thus preventing promoter occupancy.</text>
</comment>
<comment type="disease" evidence="5 7 10">
    <disease id="DI-00571">
        <name>Holoprosencephaly 9</name>
        <acronym>HPE9</acronym>
        <description>A structural anomaly of the brain, in which the developing forebrain fails to correctly separate into right and left hemispheres. Holoprosencephaly is genetically heterogeneous and associated with several distinct facies and phenotypic variability. Holoprosencephaly type 9 is characterized by defective anterior pituitary formation and pan-hypopituitarism, with or without overt forebrain cleavage abnormalities, and holoprosencephaly-like midfacial hypoplasia.</description>
        <dbReference type="MIM" id="610829"/>
    </disease>
    <text>The disease is caused by variants affecting the gene represented in this entry.</text>
</comment>
<comment type="disease" evidence="6 10 11 16">
    <disease id="DI-04127">
        <name>Culler-Jones syndrome</name>
        <acronym>CJS</acronym>
        <description>An autosomal dominant disorder with incomplete penetrance and variable expressivity, characterized by pituitary abnormalities including ectopic or non-visible posterior pituitary lobe, growth hormone deficiency, combined pituitary hormone deficiency, and, in some patients, additional features such as postaxial polydactyly, midline facial defects, and developmental delay.</description>
        <dbReference type="MIM" id="615849"/>
    </disease>
    <text>The disease is caused by variants affecting the gene represented in this entry.</text>
</comment>
<comment type="similarity">
    <text evidence="21">Belongs to the GLI C2H2-type zinc-finger protein family.</text>
</comment>
<comment type="sequence caution" evidence="21">
    <conflict type="frameshift">
        <sequence resource="EMBL-CDS" id="BAA03568"/>
    </conflict>
</comment>
<comment type="sequence caution" evidence="21">
    <conflict type="frameshift">
        <sequence resource="EMBL-CDS" id="BAA03569"/>
    </conflict>
</comment>
<comment type="sequence caution" evidence="21">
    <conflict type="frameshift">
        <sequence resource="EMBL-CDS" id="BAA25665"/>
    </conflict>
</comment>
<comment type="sequence caution" evidence="21">
    <conflict type="frameshift">
        <sequence resource="EMBL-CDS" id="BAA25667"/>
    </conflict>
</comment>
<protein>
    <recommendedName>
        <fullName evidence="21">Zinc finger protein GLI2</fullName>
    </recommendedName>
    <alternativeName>
        <fullName evidence="23">GLI family zinc finger protein 2</fullName>
    </alternativeName>
    <alternativeName>
        <fullName evidence="20">Tax helper protein</fullName>
    </alternativeName>
</protein>
<keyword id="KW-0007">Acetylation</keyword>
<keyword id="KW-0010">Activator</keyword>
<keyword id="KW-0025">Alternative splicing</keyword>
<keyword id="KW-0966">Cell projection</keyword>
<keyword id="KW-0969">Cilium</keyword>
<keyword id="KW-0963">Cytoplasm</keyword>
<keyword id="KW-0217">Developmental protein</keyword>
<keyword id="KW-0225">Disease variant</keyword>
<keyword id="KW-0238">DNA-binding</keyword>
<keyword id="KW-0370">Holoprosencephaly</keyword>
<keyword id="KW-1017">Isopeptide bond</keyword>
<keyword id="KW-0479">Metal-binding</keyword>
<keyword id="KW-0539">Nucleus</keyword>
<keyword id="KW-0597">Phosphoprotein</keyword>
<keyword id="KW-1267">Proteomics identification</keyword>
<keyword id="KW-1185">Reference proteome</keyword>
<keyword id="KW-0677">Repeat</keyword>
<keyword id="KW-0678">Repressor</keyword>
<keyword id="KW-0804">Transcription</keyword>
<keyword id="KW-0805">Transcription regulation</keyword>
<keyword id="KW-0832">Ubl conjugation</keyword>
<keyword id="KW-0862">Zinc</keyword>
<keyword id="KW-0863">Zinc-finger</keyword>
<dbReference type="EMBL" id="AB007295">
    <property type="protein sequence ID" value="BAA25665.1"/>
    <property type="status" value="ALT_FRAME"/>
    <property type="molecule type" value="mRNA"/>
</dbReference>
<dbReference type="EMBL" id="AB007296">
    <property type="protein sequence ID" value="BAA25666.1"/>
    <property type="molecule type" value="mRNA"/>
</dbReference>
<dbReference type="EMBL" id="AB007297">
    <property type="protein sequence ID" value="BAA25667.1"/>
    <property type="status" value="ALT_FRAME"/>
    <property type="molecule type" value="mRNA"/>
</dbReference>
<dbReference type="EMBL" id="AB007298">
    <property type="protein sequence ID" value="BAA25668.1"/>
    <property type="molecule type" value="mRNA"/>
</dbReference>
<dbReference type="EMBL" id="DQ086814">
    <property type="protein sequence ID" value="AAY87165.1"/>
    <property type="molecule type" value="mRNA"/>
</dbReference>
<dbReference type="EMBL" id="AC016764">
    <property type="status" value="NOT_ANNOTATED_CDS"/>
    <property type="molecule type" value="Genomic_DNA"/>
</dbReference>
<dbReference type="EMBL" id="AC017033">
    <property type="status" value="NOT_ANNOTATED_CDS"/>
    <property type="molecule type" value="Genomic_DNA"/>
</dbReference>
<dbReference type="EMBL" id="D14827">
    <property type="protein sequence ID" value="BAA03568.1"/>
    <property type="status" value="ALT_FRAME"/>
    <property type="molecule type" value="mRNA"/>
</dbReference>
<dbReference type="EMBL" id="D14828">
    <property type="protein sequence ID" value="BAA03569.1"/>
    <property type="status" value="ALT_FRAME"/>
    <property type="molecule type" value="mRNA"/>
</dbReference>
<dbReference type="EMBL" id="M20672">
    <property type="status" value="NOT_ANNOTATED_CDS"/>
    <property type="molecule type" value="Genomic_DNA"/>
</dbReference>
<dbReference type="EMBL" id="M20673">
    <property type="protein sequence ID" value="AAA35898.1"/>
    <property type="molecule type" value="Genomic_DNA"/>
</dbReference>
<dbReference type="CCDS" id="CCDS33283.1">
    <molecule id="P10070-5"/>
</dbReference>
<dbReference type="PIR" id="A31201">
    <property type="entry name" value="A31201"/>
</dbReference>
<dbReference type="PIR" id="A40679">
    <property type="entry name" value="A40679"/>
</dbReference>
<dbReference type="PIR" id="B40679">
    <property type="entry name" value="B40679"/>
</dbReference>
<dbReference type="RefSeq" id="NP_001358200.1">
    <molecule id="P10070-5"/>
    <property type="nucleotide sequence ID" value="NM_001371271.1"/>
</dbReference>
<dbReference type="RefSeq" id="NP_005261.2">
    <molecule id="P10070-5"/>
    <property type="nucleotide sequence ID" value="NM_005270.5"/>
</dbReference>
<dbReference type="SMR" id="P10070"/>
<dbReference type="BioGRID" id="108998">
    <property type="interactions" value="62"/>
</dbReference>
<dbReference type="ComplexPortal" id="CPX-148">
    <property type="entry name" value="GLI2-SUFU complex"/>
</dbReference>
<dbReference type="FunCoup" id="P10070">
    <property type="interactions" value="1329"/>
</dbReference>
<dbReference type="IntAct" id="P10070">
    <property type="interactions" value="42"/>
</dbReference>
<dbReference type="STRING" id="9606.ENSP00000390436"/>
<dbReference type="BindingDB" id="P10070"/>
<dbReference type="ChEMBL" id="CHEMBL5119"/>
<dbReference type="GlyCosmos" id="P10070">
    <property type="glycosylation" value="4 sites, 1 glycan"/>
</dbReference>
<dbReference type="GlyGen" id="P10070">
    <property type="glycosylation" value="12 sites, 1 N-linked glycan (1 site), 1 O-linked glycan (5 sites)"/>
</dbReference>
<dbReference type="iPTMnet" id="P10070"/>
<dbReference type="PhosphoSitePlus" id="P10070"/>
<dbReference type="BioMuta" id="GLI2"/>
<dbReference type="DMDM" id="215274258"/>
<dbReference type="jPOST" id="P10070"/>
<dbReference type="MassIVE" id="P10070"/>
<dbReference type="PaxDb" id="9606-ENSP00000390436"/>
<dbReference type="PeptideAtlas" id="P10070"/>
<dbReference type="ProteomicsDB" id="52552">
    <molecule id="P10070-5"/>
</dbReference>
<dbReference type="ProteomicsDB" id="52553">
    <molecule id="P10070-1"/>
</dbReference>
<dbReference type="ProteomicsDB" id="52554">
    <molecule id="P10070-2"/>
</dbReference>
<dbReference type="ProteomicsDB" id="52555">
    <molecule id="P10070-3"/>
</dbReference>
<dbReference type="ProteomicsDB" id="52556">
    <molecule id="P10070-4"/>
</dbReference>
<dbReference type="Pumba" id="P10070"/>
<dbReference type="Antibodypedia" id="3768">
    <property type="antibodies" value="344 antibodies from 38 providers"/>
</dbReference>
<dbReference type="DNASU" id="2736"/>
<dbReference type="Ensembl" id="ENST00000452319.6">
    <molecule id="P10070-5"/>
    <property type="protein sequence ID" value="ENSP00000390436.1"/>
    <property type="gene ID" value="ENSG00000074047.22"/>
</dbReference>
<dbReference type="GeneID" id="2736"/>
<dbReference type="KEGG" id="hsa:2736"/>
<dbReference type="UCSC" id="uc010flp.4">
    <molecule id="P10070-5"/>
    <property type="organism name" value="human"/>
</dbReference>
<dbReference type="AGR" id="HGNC:4318"/>
<dbReference type="CTD" id="2736"/>
<dbReference type="DisGeNET" id="2736"/>
<dbReference type="GeneCards" id="GLI2"/>
<dbReference type="GeneReviews" id="GLI2"/>
<dbReference type="HGNC" id="HGNC:4318">
    <property type="gene designation" value="GLI2"/>
</dbReference>
<dbReference type="HPA" id="ENSG00000074047">
    <property type="expression patterns" value="Tissue enhanced (ovary)"/>
</dbReference>
<dbReference type="MalaCards" id="GLI2"/>
<dbReference type="MIM" id="165230">
    <property type="type" value="gene"/>
</dbReference>
<dbReference type="MIM" id="610829">
    <property type="type" value="phenotype"/>
</dbReference>
<dbReference type="MIM" id="615849">
    <property type="type" value="phenotype"/>
</dbReference>
<dbReference type="neXtProt" id="NX_P10070"/>
<dbReference type="OpenTargets" id="ENSG00000074047"/>
<dbReference type="Orphanet" id="93925">
    <property type="disease" value="Alobar holoprosencephaly"/>
</dbReference>
<dbReference type="Orphanet" id="95494">
    <property type="disease" value="Combined pituitary hormone deficiencies, genetic forms"/>
</dbReference>
<dbReference type="Orphanet" id="93924">
    <property type="disease" value="Lobar holoprosencephaly"/>
</dbReference>
<dbReference type="Orphanet" id="280200">
    <property type="disease" value="Microform holoprosencephaly"/>
</dbReference>
<dbReference type="Orphanet" id="93926">
    <property type="disease" value="Midline interhemispheric variant of holoprosencephaly"/>
</dbReference>
<dbReference type="Orphanet" id="420584">
    <property type="disease" value="Postaxial polydactyly-anterior pituitary anomalies-facial dysmorphism syndrome"/>
</dbReference>
<dbReference type="Orphanet" id="220386">
    <property type="disease" value="Semilobar holoprosencephaly"/>
</dbReference>
<dbReference type="Orphanet" id="280195">
    <property type="disease" value="Septopreoptic holoprosencephaly"/>
</dbReference>
<dbReference type="PharmGKB" id="PA28721"/>
<dbReference type="VEuPathDB" id="HostDB:ENSG00000074047"/>
<dbReference type="eggNOG" id="KOG1721">
    <property type="taxonomic scope" value="Eukaryota"/>
</dbReference>
<dbReference type="GeneTree" id="ENSGT00940000159213"/>
<dbReference type="HOGENOM" id="CLU_003666_2_0_1"/>
<dbReference type="InParanoid" id="P10070"/>
<dbReference type="OMA" id="VIYETSC"/>
<dbReference type="OrthoDB" id="3214149at2759"/>
<dbReference type="PAN-GO" id="P10070">
    <property type="GO annotations" value="5 GO annotations based on evolutionary models"/>
</dbReference>
<dbReference type="PhylomeDB" id="P10070"/>
<dbReference type="TreeFam" id="TF350216"/>
<dbReference type="PathwayCommons" id="P10070"/>
<dbReference type="Reactome" id="R-HSA-5610783">
    <property type="pathway name" value="Degradation of GLI2 by the proteasome"/>
</dbReference>
<dbReference type="Reactome" id="R-HSA-5610787">
    <property type="pathway name" value="Hedgehog 'off' state"/>
</dbReference>
<dbReference type="Reactome" id="R-HSA-5632684">
    <property type="pathway name" value="Hedgehog 'on' state"/>
</dbReference>
<dbReference type="Reactome" id="R-HSA-5635851">
    <property type="pathway name" value="GLI proteins bind promoters of Hh responsive genes to promote transcription"/>
</dbReference>
<dbReference type="Reactome" id="R-HSA-8941284">
    <property type="pathway name" value="RUNX2 regulates chondrocyte maturation"/>
</dbReference>
<dbReference type="SignaLink" id="P10070"/>
<dbReference type="SIGNOR" id="P10070"/>
<dbReference type="BioGRID-ORCS" id="2736">
    <property type="hits" value="16 hits in 1175 CRISPR screens"/>
</dbReference>
<dbReference type="GeneWiki" id="GLI2"/>
<dbReference type="GenomeRNAi" id="2736"/>
<dbReference type="Pharos" id="P10070">
    <property type="development level" value="Tchem"/>
</dbReference>
<dbReference type="PRO" id="PR:P10070"/>
<dbReference type="Proteomes" id="UP000005640">
    <property type="component" value="Chromosome 2"/>
</dbReference>
<dbReference type="RNAct" id="P10070">
    <property type="molecule type" value="protein"/>
</dbReference>
<dbReference type="Bgee" id="ENSG00000074047">
    <property type="expression patterns" value="Expressed in tibia and 154 other cell types or tissues"/>
</dbReference>
<dbReference type="ExpressionAtlas" id="P10070">
    <property type="expression patterns" value="baseline and differential"/>
</dbReference>
<dbReference type="GO" id="GO:0005813">
    <property type="term" value="C:centrosome"/>
    <property type="evidence" value="ECO:0000314"/>
    <property type="project" value="HPA"/>
</dbReference>
<dbReference type="GO" id="GO:0036064">
    <property type="term" value="C:ciliary basal body"/>
    <property type="evidence" value="ECO:0000314"/>
    <property type="project" value="HPA"/>
</dbReference>
<dbReference type="GO" id="GO:0097546">
    <property type="term" value="C:ciliary base"/>
    <property type="evidence" value="ECO:0000304"/>
    <property type="project" value="Reactome"/>
</dbReference>
<dbReference type="GO" id="GO:0097542">
    <property type="term" value="C:ciliary tip"/>
    <property type="evidence" value="ECO:0000304"/>
    <property type="project" value="Reactome"/>
</dbReference>
<dbReference type="GO" id="GO:0005929">
    <property type="term" value="C:cilium"/>
    <property type="evidence" value="ECO:0000250"/>
    <property type="project" value="UniProtKB"/>
</dbReference>
<dbReference type="GO" id="GO:0005829">
    <property type="term" value="C:cytosol"/>
    <property type="evidence" value="ECO:0000304"/>
    <property type="project" value="Reactome"/>
</dbReference>
<dbReference type="GO" id="GO:1990788">
    <property type="term" value="C:GLI-SUFU complex"/>
    <property type="evidence" value="ECO:0000250"/>
    <property type="project" value="ComplexPortal"/>
</dbReference>
<dbReference type="GO" id="GO:0005730">
    <property type="term" value="C:nucleolus"/>
    <property type="evidence" value="ECO:0000314"/>
    <property type="project" value="HPA"/>
</dbReference>
<dbReference type="GO" id="GO:0005654">
    <property type="term" value="C:nucleoplasm"/>
    <property type="evidence" value="ECO:0000314"/>
    <property type="project" value="HPA"/>
</dbReference>
<dbReference type="GO" id="GO:0005634">
    <property type="term" value="C:nucleus"/>
    <property type="evidence" value="ECO:0000314"/>
    <property type="project" value="UniProtKB"/>
</dbReference>
<dbReference type="GO" id="GO:0003700">
    <property type="term" value="F:DNA-binding transcription factor activity"/>
    <property type="evidence" value="ECO:0000314"/>
    <property type="project" value="UniProtKB"/>
</dbReference>
<dbReference type="GO" id="GO:0000981">
    <property type="term" value="F:DNA-binding transcription factor activity, RNA polymerase II-specific"/>
    <property type="evidence" value="ECO:0000318"/>
    <property type="project" value="GO_Central"/>
</dbReference>
<dbReference type="GO" id="GO:1990841">
    <property type="term" value="F:promoter-specific chromatin binding"/>
    <property type="evidence" value="ECO:0000314"/>
    <property type="project" value="UniProtKB"/>
</dbReference>
<dbReference type="GO" id="GO:0000978">
    <property type="term" value="F:RNA polymerase II cis-regulatory region sequence-specific DNA binding"/>
    <property type="evidence" value="ECO:0000318"/>
    <property type="project" value="GO_Central"/>
</dbReference>
<dbReference type="GO" id="GO:0043565">
    <property type="term" value="F:sequence-specific DNA binding"/>
    <property type="evidence" value="ECO:0000314"/>
    <property type="project" value="UniProtKB"/>
</dbReference>
<dbReference type="GO" id="GO:1990837">
    <property type="term" value="F:sequence-specific double-stranded DNA binding"/>
    <property type="evidence" value="ECO:0000314"/>
    <property type="project" value="ARUK-UCL"/>
</dbReference>
<dbReference type="GO" id="GO:0008270">
    <property type="term" value="F:zinc ion binding"/>
    <property type="evidence" value="ECO:0000314"/>
    <property type="project" value="UniProtKB"/>
</dbReference>
<dbReference type="GO" id="GO:0007411">
    <property type="term" value="P:axon guidance"/>
    <property type="evidence" value="ECO:0000250"/>
    <property type="project" value="UniProtKB"/>
</dbReference>
<dbReference type="GO" id="GO:0048754">
    <property type="term" value="P:branching morphogenesis of an epithelial tube"/>
    <property type="evidence" value="ECO:0000250"/>
    <property type="project" value="UniProtKB"/>
</dbReference>
<dbReference type="GO" id="GO:0098586">
    <property type="term" value="P:cellular response to virus"/>
    <property type="evidence" value="ECO:0000314"/>
    <property type="project" value="UniProtKB"/>
</dbReference>
<dbReference type="GO" id="GO:0021696">
    <property type="term" value="P:cerebellar cortex morphogenesis"/>
    <property type="evidence" value="ECO:0000250"/>
    <property type="project" value="UniProtKB"/>
</dbReference>
<dbReference type="GO" id="GO:0048589">
    <property type="term" value="P:developmental growth"/>
    <property type="evidence" value="ECO:0000250"/>
    <property type="project" value="UniProtKB"/>
</dbReference>
<dbReference type="GO" id="GO:0048566">
    <property type="term" value="P:embryonic digestive tract development"/>
    <property type="evidence" value="ECO:0000250"/>
    <property type="project" value="UniProtKB"/>
</dbReference>
<dbReference type="GO" id="GO:0009913">
    <property type="term" value="P:epidermal cell differentiation"/>
    <property type="evidence" value="ECO:0000314"/>
    <property type="project" value="UniProtKB"/>
</dbReference>
<dbReference type="GO" id="GO:0021508">
    <property type="term" value="P:floor plate formation"/>
    <property type="evidence" value="ECO:0000250"/>
    <property type="project" value="UniProtKB"/>
</dbReference>
<dbReference type="GO" id="GO:0031069">
    <property type="term" value="P:hair follicle morphogenesis"/>
    <property type="evidence" value="ECO:0000315"/>
    <property type="project" value="UniProtKB"/>
</dbReference>
<dbReference type="GO" id="GO:0007507">
    <property type="term" value="P:heart development"/>
    <property type="evidence" value="ECO:0000250"/>
    <property type="project" value="UniProtKB"/>
</dbReference>
<dbReference type="GO" id="GO:0030902">
    <property type="term" value="P:hindbrain development"/>
    <property type="evidence" value="ECO:0000250"/>
    <property type="project" value="UniProtKB"/>
</dbReference>
<dbReference type="GO" id="GO:0007442">
    <property type="term" value="P:hindgut morphogenesis"/>
    <property type="evidence" value="ECO:0000250"/>
    <property type="project" value="UniProtKB"/>
</dbReference>
<dbReference type="GO" id="GO:0001822">
    <property type="term" value="P:kidney development"/>
    <property type="evidence" value="ECO:0000250"/>
    <property type="project" value="UniProtKB"/>
</dbReference>
<dbReference type="GO" id="GO:0030324">
    <property type="term" value="P:lung development"/>
    <property type="evidence" value="ECO:0000250"/>
    <property type="project" value="UniProtKB"/>
</dbReference>
<dbReference type="GO" id="GO:0030879">
    <property type="term" value="P:mammary gland development"/>
    <property type="evidence" value="ECO:0000250"/>
    <property type="project" value="UniProtKB"/>
</dbReference>
<dbReference type="GO" id="GO:0000122">
    <property type="term" value="P:negative regulation of transcription by RNA polymerase II"/>
    <property type="evidence" value="ECO:0000314"/>
    <property type="project" value="UniProtKB"/>
</dbReference>
<dbReference type="GO" id="GO:0048666">
    <property type="term" value="P:neuron development"/>
    <property type="evidence" value="ECO:0000250"/>
    <property type="project" value="UniProtKB"/>
</dbReference>
<dbReference type="GO" id="GO:0042475">
    <property type="term" value="P:odontogenesis of dentin-containing tooth"/>
    <property type="evidence" value="ECO:0000250"/>
    <property type="project" value="UniProtKB"/>
</dbReference>
<dbReference type="GO" id="GO:0002076">
    <property type="term" value="P:osteoblast development"/>
    <property type="evidence" value="ECO:0000250"/>
    <property type="project" value="UniProtKB"/>
</dbReference>
<dbReference type="GO" id="GO:0001649">
    <property type="term" value="P:osteoblast differentiation"/>
    <property type="evidence" value="ECO:0000314"/>
    <property type="project" value="UniProtKB"/>
</dbReference>
<dbReference type="GO" id="GO:0007389">
    <property type="term" value="P:pattern specification process"/>
    <property type="evidence" value="ECO:0000250"/>
    <property type="project" value="UniProtKB"/>
</dbReference>
<dbReference type="GO" id="GO:0021983">
    <property type="term" value="P:pituitary gland development"/>
    <property type="evidence" value="ECO:0000250"/>
    <property type="project" value="UniProtKB"/>
</dbReference>
<dbReference type="GO" id="GO:0045740">
    <property type="term" value="P:positive regulation of DNA replication"/>
    <property type="evidence" value="ECO:0000314"/>
    <property type="project" value="UniProtKB"/>
</dbReference>
<dbReference type="GO" id="GO:0045893">
    <property type="term" value="P:positive regulation of DNA-templated transcription"/>
    <property type="evidence" value="ECO:0000314"/>
    <property type="project" value="UniProtKB"/>
</dbReference>
<dbReference type="GO" id="GO:0033089">
    <property type="term" value="P:positive regulation of T cell differentiation in thymus"/>
    <property type="evidence" value="ECO:0000250"/>
    <property type="project" value="BHF-UCL"/>
</dbReference>
<dbReference type="GO" id="GO:0045944">
    <property type="term" value="P:positive regulation of transcription by RNA polymerase II"/>
    <property type="evidence" value="ECO:0000314"/>
    <property type="project" value="UniProtKB"/>
</dbReference>
<dbReference type="GO" id="GO:0009954">
    <property type="term" value="P:proximal/distal pattern formation"/>
    <property type="evidence" value="ECO:0000250"/>
    <property type="project" value="UniProtKB"/>
</dbReference>
<dbReference type="GO" id="GO:0006355">
    <property type="term" value="P:regulation of DNA-templated transcription"/>
    <property type="evidence" value="ECO:0000250"/>
    <property type="project" value="ComplexPortal"/>
</dbReference>
<dbReference type="GO" id="GO:0006357">
    <property type="term" value="P:regulation of transcription by RNA polymerase II"/>
    <property type="evidence" value="ECO:0000318"/>
    <property type="project" value="GO_Central"/>
</dbReference>
<dbReference type="GO" id="GO:0001501">
    <property type="term" value="P:skeletal system development"/>
    <property type="evidence" value="ECO:0000250"/>
    <property type="project" value="UniProtKB"/>
</dbReference>
<dbReference type="GO" id="GO:0007224">
    <property type="term" value="P:smoothened signaling pathway"/>
    <property type="evidence" value="ECO:0000314"/>
    <property type="project" value="UniProtKB"/>
</dbReference>
<dbReference type="GO" id="GO:0021775">
    <property type="term" value="P:smoothened signaling pathway involved in ventral spinal cord interneuron specification"/>
    <property type="evidence" value="ECO:0000250"/>
    <property type="project" value="UniProtKB"/>
</dbReference>
<dbReference type="GO" id="GO:0021513">
    <property type="term" value="P:spinal cord dorsal/ventral patterning"/>
    <property type="evidence" value="ECO:0000250"/>
    <property type="project" value="UniProtKB"/>
</dbReference>
<dbReference type="GO" id="GO:0021965">
    <property type="term" value="P:spinal cord ventral commissure morphogenesis"/>
    <property type="evidence" value="ECO:0000250"/>
    <property type="project" value="UniProtKB"/>
</dbReference>
<dbReference type="GO" id="GO:0035295">
    <property type="term" value="P:tube development"/>
    <property type="evidence" value="ECO:0000250"/>
    <property type="project" value="UniProtKB"/>
</dbReference>
<dbReference type="GO" id="GO:0007418">
    <property type="term" value="P:ventral midline development"/>
    <property type="evidence" value="ECO:0000250"/>
    <property type="project" value="UniProtKB"/>
</dbReference>
<dbReference type="GO" id="GO:0021517">
    <property type="term" value="P:ventral spinal cord development"/>
    <property type="evidence" value="ECO:0000250"/>
    <property type="project" value="UniProtKB"/>
</dbReference>
<dbReference type="FunFam" id="3.30.160.60:FF:000019">
    <property type="entry name" value="GLI family zinc finger 3"/>
    <property type="match status" value="1"/>
</dbReference>
<dbReference type="FunFam" id="3.30.160.60:FF:000031">
    <property type="entry name" value="GLI family zinc finger 3"/>
    <property type="match status" value="1"/>
</dbReference>
<dbReference type="FunFam" id="3.30.160.60:FF:000036">
    <property type="entry name" value="GLI family zinc finger 3"/>
    <property type="match status" value="1"/>
</dbReference>
<dbReference type="FunFam" id="3.30.160.60:FF:000048">
    <property type="entry name" value="GLI family zinc finger 3"/>
    <property type="match status" value="1"/>
</dbReference>
<dbReference type="FunFam" id="3.30.160.60:FF:000068">
    <property type="entry name" value="GLI family zinc finger 3"/>
    <property type="match status" value="1"/>
</dbReference>
<dbReference type="Gene3D" id="3.30.160.60">
    <property type="entry name" value="Classic Zinc Finger"/>
    <property type="match status" value="5"/>
</dbReference>
<dbReference type="InterPro" id="IPR043359">
    <property type="entry name" value="GLI-like"/>
</dbReference>
<dbReference type="InterPro" id="IPR056436">
    <property type="entry name" value="Znf-C2H2_ZIC1-5/GLI1-3-like"/>
</dbReference>
<dbReference type="InterPro" id="IPR036236">
    <property type="entry name" value="Znf_C2H2_sf"/>
</dbReference>
<dbReference type="InterPro" id="IPR013087">
    <property type="entry name" value="Znf_C2H2_type"/>
</dbReference>
<dbReference type="PANTHER" id="PTHR45718">
    <property type="entry name" value="TRANSCRIPTIONAL ACTIVATOR CUBITUS INTERRUPTUS"/>
    <property type="match status" value="1"/>
</dbReference>
<dbReference type="PANTHER" id="PTHR45718:SF6">
    <property type="entry name" value="ZINC FINGER PROTEIN GLI2"/>
    <property type="match status" value="1"/>
</dbReference>
<dbReference type="Pfam" id="PF00096">
    <property type="entry name" value="zf-C2H2"/>
    <property type="match status" value="2"/>
</dbReference>
<dbReference type="Pfam" id="PF23561">
    <property type="entry name" value="zf-C2H2_15"/>
    <property type="match status" value="1"/>
</dbReference>
<dbReference type="SMART" id="SM00355">
    <property type="entry name" value="ZnF_C2H2"/>
    <property type="match status" value="5"/>
</dbReference>
<dbReference type="SUPFAM" id="SSF57667">
    <property type="entry name" value="beta-beta-alpha zinc fingers"/>
    <property type="match status" value="3"/>
</dbReference>
<dbReference type="PROSITE" id="PS00028">
    <property type="entry name" value="ZINC_FINGER_C2H2_1"/>
    <property type="match status" value="4"/>
</dbReference>
<dbReference type="PROSITE" id="PS50157">
    <property type="entry name" value="ZINC_FINGER_C2H2_2"/>
    <property type="match status" value="4"/>
</dbReference>
<sequence length="1586" mass="167783">METSASATASEKQEAKSGILEAAGFPDPGKKASPLVVAAAAAAAVAAQGVPQHLLPPFHAPLPIDMRHQEGRYHYEPHSVHGVHGPPALSGSPVISDISLIRLSPHPAGPGESPFNAPHPYVNPHMEHYLRSVHSSPTLSMISAARGLSPADVAQEHLKERGLFGLPAPGTTPSDYYHQMTLVAGHPAPYGDLLMQSGGAASAPHLHDYLNPVDVSRFSSPRVTPRLSRKRALSISPLSDASLDLQRMIRTSPNSLVAYINNSRSSSAASGSYGHLSAGALSPAFTFPHPINPVAYQQILSQQRGLGSAFGHTPPLIQPSPTFLAQQPMALTSINATPTQLSSSSNCLSDTNQNKQSSESAVSSTVNPVAIHKRSKVKTEPEGLRPASPLALTQGQVSGHGSCGCALPLSQEQLADLKEDLDRDDCKQEAEVVIYETNCHWEDCTKEYDTQEQLVHHINNEHIHGEKKEFVCRWQACTREQKPFKAQYMLVVHMRRHTGEKPHKCTFEGCSKAYSRLENLKTHLRSHTGEKPYVCEHEGCNKAFSNASDRAKHQNRTHSNEKPYICKIPGCTKRYTDPSSLRKHVKTVHGPDAHVTKKQRNDVHLRTPLLKENGDSEAGTEPGGPESTEASSTSQAVEDCLHVRAIKTESSGLCQSSPGAQSSCSSEPSPLGSAPNNDSGVEMPGTGPGSLGDLTALDDTPPGADTSALAAPSAGGLQLRKHMTTMHRFEQLKKEKLKSLKDSCSWAGPTPHTRNTKLPPLPGSGSILENFSGSGGGGPAGLLPNPRLSELSASEVTMLSQLQERRDSSTSTVSSAYTVSRRSSGISPYFSSRRSSEASPLGAGRPHNASSADSYDPISTDASRRSSEASQCSGGSGLLNLTPAQQYSLRAKYAAATGGPPPTPLPGLERMSLRTRLALLDAPERTLPAGCPRPLGPRRGSDGPTYGHGHAGAAPAFPHEAPGGGARRASDPVRRPDALSLPRVQRFHSTHNVNPGPLPPCADRRGLRLQSHPSTDGGLARGAYSPRPPSISENVAMEAVAAGVDGAGPEADLGLPEDDLVLPDDVVQYIKAHASGALDEGTGQVYPTESTGFSDNPRLPSPGLHGQRRMVAADSNVGPSAPMLGGCQLGFGAPSSLNKNNMPVQWNEVSSGTVDALASQVKPPPFPQGNLAVVQQKPAFGQYPGYSPQGLQASPGGLDSTQPHLQPRSGAPSQGIPRVNYMQQLRQPVAGSQCPGMTTTMSPHACYGQVHPQLSPSTISGALNQFPQSCSNMPAKPGHLGHPQQTEVAPDPTTMGNRHRELGVPDSALAGVPPPHPVQSYPQQSHHLAASMSQEGYHQVPSLLPARQPGFMEPQTGPMGVATAGFGLVQPRPPLEPSPTGRHRGVRAVQQQLAYARATGHAMAAMPSSQETAEAVPKGAMGNMGSVPPQPPPQDAGGAPDHSMLYYYGQIHMYEQDGGLENLGSCQVMRSQPPQPQACQDSIQPQPLPSPGVNQVSSTVDSQLLEAPQIDFDAIMDDGDHSSLFSGALSPSLLHSLSQNSSRLTTPRNSLTLPSIPAGISNMAVGDMSSMLTSLAEESKFLNMMT</sequence>
<accession>P10070</accession>
<accession>O60252</accession>
<accession>O60253</accession>
<accession>O60254</accession>
<accession>O60255</accession>
<accession>Q15590</accession>
<accession>Q15591</accession>
<accession>Q4JHT4</accession>
<reference key="1">
    <citation type="journal article" date="1998" name="J. Virol.">
        <title>Cloning of novel isoforms of the human Gli2 oncogene and their activities to enhance tax-dependent transcription of the human T-cell leukemia virus type 1 genome.</title>
        <authorList>
            <person name="Tanimura A."/>
            <person name="Dan S."/>
            <person name="Yoshida M."/>
        </authorList>
    </citation>
    <scope>NUCLEOTIDE SEQUENCE [MRNA] (ISOFORMS 1; 2; 3 AND 4)</scope>
    <scope>FUNCTION</scope>
    <scope>DNA-BINDING</scope>
    <scope>SUBCELLULAR LOCATION</scope>
    <scope>TISSUE SPECIFICITY</scope>
    <scope>VARIANTS SER-1156 AND ASN-1306</scope>
</reference>
<reference key="2">
    <citation type="journal article" date="2005" name="Hum. Mol. Genet.">
        <title>A previously unidentified amino-terminal domain regulates transcriptional activity of wild-type and disease-associated human GLI2.</title>
        <authorList>
            <person name="Roessler E."/>
            <person name="Ermilov A.N."/>
            <person name="Grange D.K."/>
            <person name="Wang A."/>
            <person name="Grachtchouk M."/>
            <person name="Dlugosz A.A."/>
            <person name="Muenke M."/>
        </authorList>
    </citation>
    <scope>NUCLEOTIDE SEQUENCE [MRNA] (ISOFORM 5)</scope>
    <scope>FUNCTION</scope>
    <scope>INVOLVEMENT IN CJS</scope>
</reference>
<reference key="3">
    <citation type="journal article" date="2005" name="Nature">
        <title>Generation and annotation of the DNA sequences of human chromosomes 2 and 4.</title>
        <authorList>
            <person name="Hillier L.W."/>
            <person name="Graves T.A."/>
            <person name="Fulton R.S."/>
            <person name="Fulton L.A."/>
            <person name="Pepin K.H."/>
            <person name="Minx P."/>
            <person name="Wagner-McPherson C."/>
            <person name="Layman D."/>
            <person name="Wylie K."/>
            <person name="Sekhon M."/>
            <person name="Becker M.C."/>
            <person name="Fewell G.A."/>
            <person name="Delehaunty K.D."/>
            <person name="Miner T.L."/>
            <person name="Nash W.E."/>
            <person name="Kremitzki C."/>
            <person name="Oddy L."/>
            <person name="Du H."/>
            <person name="Sun H."/>
            <person name="Bradshaw-Cordum H."/>
            <person name="Ali J."/>
            <person name="Carter J."/>
            <person name="Cordes M."/>
            <person name="Harris A."/>
            <person name="Isak A."/>
            <person name="van Brunt A."/>
            <person name="Nguyen C."/>
            <person name="Du F."/>
            <person name="Courtney L."/>
            <person name="Kalicki J."/>
            <person name="Ozersky P."/>
            <person name="Abbott S."/>
            <person name="Armstrong J."/>
            <person name="Belter E.A."/>
            <person name="Caruso L."/>
            <person name="Cedroni M."/>
            <person name="Cotton M."/>
            <person name="Davidson T."/>
            <person name="Desai A."/>
            <person name="Elliott G."/>
            <person name="Erb T."/>
            <person name="Fronick C."/>
            <person name="Gaige T."/>
            <person name="Haakenson W."/>
            <person name="Haglund K."/>
            <person name="Holmes A."/>
            <person name="Harkins R."/>
            <person name="Kim K."/>
            <person name="Kruchowski S.S."/>
            <person name="Strong C.M."/>
            <person name="Grewal N."/>
            <person name="Goyea E."/>
            <person name="Hou S."/>
            <person name="Levy A."/>
            <person name="Martinka S."/>
            <person name="Mead K."/>
            <person name="McLellan M.D."/>
            <person name="Meyer R."/>
            <person name="Randall-Maher J."/>
            <person name="Tomlinson C."/>
            <person name="Dauphin-Kohlberg S."/>
            <person name="Kozlowicz-Reilly A."/>
            <person name="Shah N."/>
            <person name="Swearengen-Shahid S."/>
            <person name="Snider J."/>
            <person name="Strong J.T."/>
            <person name="Thompson J."/>
            <person name="Yoakum M."/>
            <person name="Leonard S."/>
            <person name="Pearman C."/>
            <person name="Trani L."/>
            <person name="Radionenko M."/>
            <person name="Waligorski J.E."/>
            <person name="Wang C."/>
            <person name="Rock S.M."/>
            <person name="Tin-Wollam A.-M."/>
            <person name="Maupin R."/>
            <person name="Latreille P."/>
            <person name="Wendl M.C."/>
            <person name="Yang S.-P."/>
            <person name="Pohl C."/>
            <person name="Wallis J.W."/>
            <person name="Spieth J."/>
            <person name="Bieri T.A."/>
            <person name="Berkowicz N."/>
            <person name="Nelson J.O."/>
            <person name="Osborne J."/>
            <person name="Ding L."/>
            <person name="Meyer R."/>
            <person name="Sabo A."/>
            <person name="Shotland Y."/>
            <person name="Sinha P."/>
            <person name="Wohldmann P.E."/>
            <person name="Cook L.L."/>
            <person name="Hickenbotham M.T."/>
            <person name="Eldred J."/>
            <person name="Williams D."/>
            <person name="Jones T.A."/>
            <person name="She X."/>
            <person name="Ciccarelli F.D."/>
            <person name="Izaurralde E."/>
            <person name="Taylor J."/>
            <person name="Schmutz J."/>
            <person name="Myers R.M."/>
            <person name="Cox D.R."/>
            <person name="Huang X."/>
            <person name="McPherson J.D."/>
            <person name="Mardis E.R."/>
            <person name="Clifton S.W."/>
            <person name="Warren W.C."/>
            <person name="Chinwalla A.T."/>
            <person name="Eddy S.R."/>
            <person name="Marra M.A."/>
            <person name="Ovcharenko I."/>
            <person name="Furey T.S."/>
            <person name="Miller W."/>
            <person name="Eichler E.E."/>
            <person name="Bork P."/>
            <person name="Suyama M."/>
            <person name="Torrents D."/>
            <person name="Waterston R.H."/>
            <person name="Wilson R.K."/>
        </authorList>
    </citation>
    <scope>NUCLEOTIDE SEQUENCE [LARGE SCALE GENOMIC DNA]</scope>
</reference>
<reference key="4">
    <citation type="journal article" date="1993" name="J. Virol.">
        <title>A new regulatory element that augments the Tax-dependent enhancer of human T-cell leukemia virus type 1 and cloning of cDNAs encoding its binding proteins.</title>
        <authorList>
            <person name="Tanimura A."/>
            <person name="Teshima H."/>
            <person name="Fujisawa J."/>
            <person name="Yoshida M."/>
        </authorList>
    </citation>
    <scope>NUCLEOTIDE SEQUENCE [MRNA] OF 1-857 (ISOFORMS 1; 2; 3 AND 4)</scope>
</reference>
<reference key="5">
    <citation type="journal article" date="1988" name="Mol. Cell. Biol.">
        <title>The GLI-Kruppel family of human genes.</title>
        <authorList>
            <person name="Ruppert J.M."/>
            <person name="Kinzler K.W."/>
            <person name="Wong A.J."/>
            <person name="Bigner S.H."/>
            <person name="Kao F.T."/>
            <person name="Law M.L."/>
            <person name="Seuanez H.N."/>
            <person name="O'Brien S.J."/>
            <person name="Vogelstein B."/>
        </authorList>
    </citation>
    <scope>NUCLEOTIDE SEQUENCE [GENOMIC DNA] OF 456-560 (ISOFORMS 1; 2; 3 AND 4)</scope>
</reference>
<reference key="6">
    <citation type="journal article" date="2000" name="Nat. Cell Biol.">
        <title>Gli regulation by the opposing activities of fused and suppressor of fused.</title>
        <authorList>
            <person name="Murone M."/>
            <person name="Luoh S.-L."/>
            <person name="Stone D."/>
            <person name="Li W."/>
            <person name="Gurney A."/>
            <person name="Armanini M."/>
            <person name="Grey C."/>
            <person name="Rosenthal A."/>
            <person name="de Sauvage F.J."/>
        </authorList>
    </citation>
    <scope>INTERACTION WITH STK36</scope>
</reference>
<reference key="7">
    <citation type="journal article" date="2003" name="Proc. Natl. Acad. Sci. U.S.A.">
        <title>Loss-of-function mutations in the human GLI2 gene are associated with pituitary anomalies and holoprosencephaly-like features.</title>
        <authorList>
            <person name="Roessler E."/>
            <person name="Du Y.-Z."/>
            <person name="Mullor J.L."/>
            <person name="Casas E."/>
            <person name="Allen W.P."/>
            <person name="Gillessen-Kaesbach G."/>
            <person name="Roeder E.R."/>
            <person name="Ming J.E."/>
            <person name="Ruiz i Altaba A."/>
            <person name="Muenke M."/>
        </authorList>
    </citation>
    <scope>INVOLVEMENT IN HPE9</scope>
</reference>
<reference key="8">
    <citation type="journal article" date="2008" name="Cell">
        <title>Application of active and kinase-deficient kinome collection for identification of kinases regulating hedgehog signaling.</title>
        <authorList>
            <person name="Varjosalo M."/>
            <person name="Bjorklund M."/>
            <person name="Cheng F."/>
            <person name="Syvanen H."/>
            <person name="Kivioja T."/>
            <person name="Kilpinen S."/>
            <person name="Sun Z."/>
            <person name="Kallioniemi O."/>
            <person name="Stunnenberg H.G."/>
            <person name="He W.W."/>
            <person name="Ojala P."/>
            <person name="Taipale J."/>
        </authorList>
    </citation>
    <scope>FUNCTION</scope>
    <scope>PHOSPHORYLATION AT SER-388 AND SER-1011</scope>
</reference>
<reference key="9">
    <citation type="journal article" date="2008" name="Proc. Natl. Acad. Sci. U.S.A.">
        <title>A quantitative atlas of mitotic phosphorylation.</title>
        <authorList>
            <person name="Dephoure N."/>
            <person name="Zhou C."/>
            <person name="Villen J."/>
            <person name="Beausoleil S.A."/>
            <person name="Bakalarski C.E."/>
            <person name="Elledge S.J."/>
            <person name="Gygi S.P."/>
        </authorList>
    </citation>
    <scope>PHOSPHORYLATION [LARGE SCALE ANALYSIS] AT SER-234 AND SER-236</scope>
    <scope>IDENTIFICATION BY MASS SPECTROMETRY [LARGE SCALE ANALYSIS]</scope>
    <source>
        <tissue>Cervix carcinoma</tissue>
    </source>
</reference>
<reference key="10">
    <citation type="journal article" date="2010" name="Exp. Cell Res.">
        <title>Identification of a novel serine/threonine kinase ULK3 as a positive regulator of Hedgehog pathway.</title>
        <authorList>
            <person name="Maloverjan A."/>
            <person name="Piirsoo M."/>
            <person name="Michelson P."/>
            <person name="Kogerman P."/>
            <person name="Osterlund T."/>
        </authorList>
    </citation>
    <scope>PHOSPHORYLATION</scope>
    <scope>FUNCTION</scope>
</reference>
<reference key="11">
    <citation type="journal article" date="2010" name="Sci. Signal.">
        <title>Quantitative phosphoproteomics reveals widespread full phosphorylation site occupancy during mitosis.</title>
        <authorList>
            <person name="Olsen J.V."/>
            <person name="Vermeulen M."/>
            <person name="Santamaria A."/>
            <person name="Kumar C."/>
            <person name="Miller M.L."/>
            <person name="Jensen L.J."/>
            <person name="Gnad F."/>
            <person name="Cox J."/>
            <person name="Jensen T.S."/>
            <person name="Nigg E.A."/>
            <person name="Brunak S."/>
            <person name="Mann M."/>
        </authorList>
    </citation>
    <scope>PHOSPHORYLATION [LARGE SCALE ANALYSIS] AT SER-149; SER-234; SER-236 AND SER-242</scope>
    <scope>IDENTIFICATION BY MASS SPECTROMETRY [LARGE SCALE ANALYSIS]</scope>
    <source>
        <tissue>Cervix carcinoma</tissue>
    </source>
</reference>
<reference key="12">
    <citation type="journal article" date="2013" name="PLoS ONE">
        <title>Gli2 acetylation at lysine 757 regulates hedgehog-dependent transcriptional output by preventing its promoter occupancy.</title>
        <authorList>
            <person name="Coni S."/>
            <person name="Antonucci L."/>
            <person name="D'Amico D."/>
            <person name="Di Magno L."/>
            <person name="Infante P."/>
            <person name="De Smaele E."/>
            <person name="Giannini G."/>
            <person name="Di Marcotullio L."/>
            <person name="Screpanti I."/>
            <person name="Gulino A."/>
            <person name="Canettieri G."/>
        </authorList>
    </citation>
    <scope>ACETYLATION AT LYS-757</scope>
</reference>
<reference key="13">
    <citation type="journal article" date="2013" name="Acta Crystallogr. D">
        <title>Structural basis of SUFU-GLI interaction in human Hedgehog signalling regulation.</title>
        <authorList>
            <person name="Cherry A.L."/>
            <person name="Finta C."/>
            <person name="Karlstrom M."/>
            <person name="Jin Q."/>
            <person name="Schwend T."/>
            <person name="Astorga-Wells J."/>
            <person name="Zubarev R.A."/>
            <person name="Del Campo M."/>
            <person name="Criswell A.R."/>
            <person name="de Sanctis D."/>
            <person name="Jovine L."/>
            <person name="Toftgard R."/>
        </authorList>
    </citation>
    <scope>FUNCTION</scope>
    <scope>INTERACTION WITH SUFU</scope>
</reference>
<reference key="14">
    <citation type="journal article" date="2010" name="J. Clin. Endocrinol. Metab.">
        <title>Novel heterozygous nonsense GLI2 mutations in patients with hypopituitarism and ectopic posterior pituitary lobe without holoprosencephaly.</title>
        <authorList>
            <person name="Franca M.M."/>
            <person name="Jorge A.A."/>
            <person name="Carvalho L.R."/>
            <person name="Costalonga E.F."/>
            <person name="Vasques G.A."/>
            <person name="Leite C.C."/>
            <person name="Mendonca B.B."/>
            <person name="Arnhold I.J."/>
        </authorList>
    </citation>
    <scope>INVOLVEMENT BY HPE9</scope>
    <scope>INVOLVEMENT IN CJS</scope>
    <scope>VARIANT CJS LEU-608</scope>
    <scope>FUNCTION</scope>
</reference>
<reference key="15">
    <citation type="journal article" date="2015" name="Cell Rep.">
        <title>FOXC1 activates smoothened-independent Hedgehog signaling in basal-like breast cancer.</title>
        <authorList>
            <person name="Han B."/>
            <person name="Qu Y."/>
            <person name="Jin Y."/>
            <person name="Yu Y."/>
            <person name="Deng N."/>
            <person name="Wawrowsky K."/>
            <person name="Zhang X."/>
            <person name="Li N."/>
            <person name="Bose S."/>
            <person name="Wang Q."/>
            <person name="Sakkiah S."/>
            <person name="Abrol R."/>
            <person name="Jensen T.W."/>
            <person name="Berman B.P."/>
            <person name="Tanaka H."/>
            <person name="Johnson J."/>
            <person name="Gao B."/>
            <person name="Hao J."/>
            <person name="Liu Z."/>
            <person name="Buttyan R."/>
            <person name="Ray P.S."/>
            <person name="Hung M.C."/>
            <person name="Giuliano A.E."/>
            <person name="Cui X."/>
        </authorList>
    </citation>
    <scope>FUNCTION</scope>
    <scope>INTERACTION WITH FOXC1</scope>
    <scope>SUBCELLULAR LOCATION</scope>
</reference>
<reference key="16">
    <citation type="journal article" date="2017" name="Nat. Struct. Mol. Biol.">
        <title>Site-specific mapping of the human SUMO proteome reveals co-modification with phosphorylation.</title>
        <authorList>
            <person name="Hendriks I.A."/>
            <person name="Lyon D."/>
            <person name="Young C."/>
            <person name="Jensen L.J."/>
            <person name="Vertegaal A.C."/>
            <person name="Nielsen M.L."/>
        </authorList>
    </citation>
    <scope>SUMOYLATION [LARGE SCALE ANALYSIS] AT LYS-50 (ISOFORMS 2 AND 4)</scope>
    <scope>IDENTIFICATION BY MASS SPECTROMETRY [LARGE SCALE ANALYSIS]</scope>
</reference>
<reference key="17">
    <citation type="journal article" date="2006" name="Am. J. Med. Genet. A">
        <title>GLI2 mutations in four Brazilian patients: how wide is the phenotypic spectrum?</title>
        <authorList>
            <person name="Rahimov F."/>
            <person name="Ribeiro L.A."/>
            <person name="de Miranda E."/>
            <person name="Richieri-Costa A."/>
            <person name="Murray J.C."/>
        </authorList>
    </citation>
    <scope>VARIANTS HPE9 GLY-479; SER-932 AND LEU-1554</scope>
    <scope>VARIANT ILE-1444</scope>
</reference>
<reference key="18">
    <citation type="journal article" date="2013" name="J. Clin. Endocrinol. Metab.">
        <title>Functional characterization of a heterozygous GLI2 missense mutation in patients with multiple pituitary hormone deficiency.</title>
        <authorList>
            <person name="Flemming G.M."/>
            <person name="Klammt J."/>
            <person name="Ambler G."/>
            <person name="Bao Y."/>
            <person name="Blum W.F."/>
            <person name="Cowell C."/>
            <person name="Donaghue K."/>
            <person name="Howard N."/>
            <person name="Kumar A."/>
            <person name="Sanchez J."/>
            <person name="Stobbe H."/>
            <person name="Pfaeffle R.W."/>
        </authorList>
    </citation>
    <scope>VARIANTS CJS PRO-516 AND 1444-MET-LEU-1445 DELINS ILE-PHE</scope>
    <scope>CHARACTERIZATION OF VARIANTS CJS PRO-516 AND 1444-MET-LEU-1445 DELINS ILE-PHE</scope>
    <scope>VARIANTS VAL-1352; ASN-1520 AND HIS-1543</scope>
    <scope>CHARACTERIZATION OF VARIANTS VAL-1352; ASN-1520 AND HIS-1543</scope>
</reference>
<reference key="19">
    <citation type="journal article" date="2016" name="Nature">
        <title>Analysis of protein-coding genetic variation in 60,706 humans.</title>
        <authorList>
            <consortium name="Exome Aggregation Consortium"/>
            <person name="Lek M."/>
            <person name="Karczewski K.J."/>
            <person name="Minikel E.V."/>
            <person name="Samocha K.E."/>
            <person name="Banks E."/>
            <person name="Fennell T."/>
            <person name="O'Donnell-Luria A.H."/>
            <person name="Ware J.S."/>
            <person name="Hill A.J."/>
            <person name="Cummings B.B."/>
            <person name="Tukiainen T."/>
            <person name="Birnbaum D.P."/>
            <person name="Kosmicki J.A."/>
            <person name="Duncan L.E."/>
            <person name="Estrada K."/>
            <person name="Zhao F."/>
            <person name="Zou J."/>
            <person name="Pierce-Hoffman E."/>
            <person name="Berghout J."/>
            <person name="Cooper D.N."/>
            <person name="Deflaux N."/>
            <person name="DePristo M."/>
            <person name="Do R."/>
            <person name="Flannick J."/>
            <person name="Fromer M."/>
            <person name="Gauthier L."/>
            <person name="Goldstein J."/>
            <person name="Gupta N."/>
            <person name="Howrigan D."/>
            <person name="Kiezun A."/>
            <person name="Kurki M.I."/>
            <person name="Moonshine A.L."/>
            <person name="Natarajan P."/>
            <person name="Orozco L."/>
            <person name="Peloso G.M."/>
            <person name="Poplin R."/>
            <person name="Rivas M.A."/>
            <person name="Ruano-Rubio V."/>
            <person name="Rose S.A."/>
            <person name="Ruderfer D.M."/>
            <person name="Shakir K."/>
            <person name="Stenson P.D."/>
            <person name="Stevens C."/>
            <person name="Thomas B.P."/>
            <person name="Tiao G."/>
            <person name="Tusie-Luna M.T."/>
            <person name="Weisburd B."/>
            <person name="Won H.H."/>
            <person name="Yu D."/>
            <person name="Altshuler D.M."/>
            <person name="Ardissino D."/>
            <person name="Boehnke M."/>
            <person name="Danesh J."/>
            <person name="Donnelly S."/>
            <person name="Elosua R."/>
            <person name="Florez J.C."/>
            <person name="Gabriel S.B."/>
            <person name="Getz G."/>
            <person name="Glatt S.J."/>
            <person name="Hultman C.M."/>
            <person name="Kathiresan S."/>
            <person name="Laakso M."/>
            <person name="McCarroll S."/>
            <person name="McCarthy M.I."/>
            <person name="McGovern D."/>
            <person name="McPherson R."/>
            <person name="Neale B.M."/>
            <person name="Palotie A."/>
            <person name="Purcell S.M."/>
            <person name="Saleheen D."/>
            <person name="Scharf J.M."/>
            <person name="Sklar P."/>
            <person name="Sullivan P.F."/>
            <person name="Tuomilehto J."/>
            <person name="Tsuang M.T."/>
            <person name="Watkins H.C."/>
            <person name="Wilson J.G."/>
            <person name="Daly M.J."/>
            <person name="MacArthur D.G."/>
        </authorList>
    </citation>
    <scope>VARIANT ILE-1444</scope>
</reference>
<reference key="20">
    <citation type="journal article" date="2017" name="Hum. Mol. Genet.">
        <title>GLI1 inactivation is associated with developmental phenotypes overlapping with Ellis-van Creveld syndrome.</title>
        <authorList>
            <person name="Palencia-Campos A."/>
            <person name="Ullah A."/>
            <person name="Nevado J."/>
            <person name="Yildirim R."/>
            <person name="Unal E."/>
            <person name="Ciorraga M."/>
            <person name="Barruz P."/>
            <person name="Chico L."/>
            <person name="Piceci-Sparascio F."/>
            <person name="Guida V."/>
            <person name="De Luca A."/>
            <person name="Kayserili H."/>
            <person name="Ullah I."/>
            <person name="Burmeister M."/>
            <person name="Lapunzina P."/>
            <person name="Ahmad W."/>
            <person name="Morales A.V."/>
            <person name="Ruiz-Perez V.L."/>
        </authorList>
    </citation>
    <scope>VARIANTS VAL-1352 AND ASN-1520</scope>
</reference>
<feature type="chain" id="PRO_0000354050" description="Zinc finger protein GLI2">
    <location>
        <begin position="1"/>
        <end position="1586"/>
    </location>
</feature>
<feature type="zinc finger region" description="C2H2-type 1" evidence="2">
    <location>
        <begin position="437"/>
        <end position="464"/>
    </location>
</feature>
<feature type="zinc finger region" description="C2H2-type 2; degenerate" evidence="2">
    <location>
        <begin position="475"/>
        <end position="497"/>
    </location>
</feature>
<feature type="zinc finger region" description="C2H2-type 3" evidence="2">
    <location>
        <begin position="503"/>
        <end position="527"/>
    </location>
</feature>
<feature type="zinc finger region" description="C2H2-type 4" evidence="2">
    <location>
        <begin position="533"/>
        <end position="558"/>
    </location>
</feature>
<feature type="zinc finger region" description="C2H2-type 5" evidence="2">
    <location>
        <begin position="564"/>
        <end position="589"/>
    </location>
</feature>
<feature type="region of interest" description="Disordered" evidence="3">
    <location>
        <begin position="1"/>
        <end position="22"/>
    </location>
</feature>
<feature type="region of interest" description="Disordered" evidence="3">
    <location>
        <begin position="342"/>
        <end position="389"/>
    </location>
</feature>
<feature type="region of interest" description="Disordered" evidence="3">
    <location>
        <begin position="577"/>
        <end position="636"/>
    </location>
</feature>
<feature type="region of interest" description="Disordered" evidence="3">
    <location>
        <begin position="650"/>
        <end position="716"/>
    </location>
</feature>
<feature type="region of interest" description="Disordered" evidence="3">
    <location>
        <begin position="742"/>
        <end position="879"/>
    </location>
</feature>
<feature type="region of interest" description="Disordered" evidence="3">
    <location>
        <begin position="925"/>
        <end position="1030"/>
    </location>
</feature>
<feature type="region of interest" description="Disordered" evidence="3">
    <location>
        <begin position="1182"/>
        <end position="1215"/>
    </location>
</feature>
<feature type="region of interest" description="Disordered" evidence="3">
    <location>
        <begin position="1421"/>
        <end position="1441"/>
    </location>
</feature>
<feature type="region of interest" description="Disordered" evidence="3">
    <location>
        <begin position="1469"/>
        <end position="1498"/>
    </location>
</feature>
<feature type="compositionally biased region" description="Polar residues" evidence="3">
    <location>
        <begin position="1"/>
        <end position="10"/>
    </location>
</feature>
<feature type="compositionally biased region" description="Polar residues" evidence="3">
    <location>
        <begin position="342"/>
        <end position="367"/>
    </location>
</feature>
<feature type="compositionally biased region" description="Basic and acidic residues" evidence="3">
    <location>
        <begin position="589"/>
        <end position="605"/>
    </location>
</feature>
<feature type="compositionally biased region" description="Low complexity" evidence="3">
    <location>
        <begin position="654"/>
        <end position="674"/>
    </location>
</feature>
<feature type="compositionally biased region" description="Polar residues" evidence="3">
    <location>
        <begin position="791"/>
        <end position="802"/>
    </location>
</feature>
<feature type="compositionally biased region" description="Low complexity" evidence="3">
    <location>
        <begin position="809"/>
        <end position="824"/>
    </location>
</feature>
<feature type="compositionally biased region" description="Low complexity" evidence="3">
    <location>
        <begin position="947"/>
        <end position="961"/>
    </location>
</feature>
<feature type="compositionally biased region" description="Basic and acidic residues" evidence="3">
    <location>
        <begin position="968"/>
        <end position="977"/>
    </location>
</feature>
<feature type="compositionally biased region" description="Polar residues" evidence="3">
    <location>
        <begin position="1469"/>
        <end position="1485"/>
    </location>
</feature>
<feature type="modified residue" description="Phosphoserine" evidence="25">
    <location>
        <position position="149"/>
    </location>
</feature>
<feature type="modified residue" description="Phosphoserine" evidence="24 25">
    <location>
        <position position="234"/>
    </location>
</feature>
<feature type="modified residue" description="Phosphoserine" evidence="24 25">
    <location>
        <position position="236"/>
    </location>
</feature>
<feature type="modified residue" description="Phosphoserine" evidence="25">
    <location>
        <position position="242"/>
    </location>
</feature>
<feature type="modified residue" description="Phosphoserine; by DYRK2" evidence="8">
    <location>
        <position position="388"/>
    </location>
</feature>
<feature type="modified residue" description="Phosphothreonine" evidence="1">
    <location>
        <position position="725"/>
    </location>
</feature>
<feature type="modified residue" description="N6-acetyllysine; by EP300" evidence="12">
    <location>
        <position position="757"/>
    </location>
</feature>
<feature type="modified residue" description="Phosphoserine; by DYRK2" evidence="8">
    <location>
        <position position="1011"/>
    </location>
</feature>
<feature type="splice variant" id="VSP_035708" description="In isoform 1, isoform 2, isoform 3 and isoform 4." evidence="19 20">
    <location>
        <begin position="1"/>
        <end position="328"/>
    </location>
</feature>
<feature type="splice variant" id="VSP_006877" description="In isoform 2 and isoform 4." evidence="19 20">
    <location>
        <begin position="394"/>
        <end position="410"/>
    </location>
</feature>
<feature type="splice variant" id="VSP_006878" description="In isoform 3 and isoform 4." evidence="19 20">
    <original>VSSGTVDAL</original>
    <variation>ASATWLSGT</variation>
    <location>
        <begin position="1149"/>
        <end position="1157"/>
    </location>
</feature>
<feature type="splice variant" id="VSP_006879" description="In isoform 3 and isoform 4." evidence="19 20">
    <location>
        <begin position="1158"/>
        <end position="1586"/>
    </location>
</feature>
<feature type="sequence variant" id="VAR_047303" description="In dbSNP:rs13427953.">
    <original>D</original>
    <variation>H</variation>
    <location>
        <position position="449"/>
    </location>
</feature>
<feature type="sequence variant" id="VAR_032975" description="In HPE9; uncertain significance; dbSNP:rs121917708." evidence="7">
    <original>R</original>
    <variation>G</variation>
    <location>
        <position position="479"/>
    </location>
</feature>
<feature type="sequence variant" id="VAR_075214" description="In CJS; loss of DNA-binding; loss of transcription factor activity." evidence="11">
    <original>R</original>
    <variation>P</variation>
    <location>
        <position position="516"/>
    </location>
</feature>
<feature type="sequence variant" id="VAR_047304" description="In dbSNP:rs12618388.">
    <original>S</original>
    <variation>I</variation>
    <location>
        <position position="579"/>
    </location>
</feature>
<feature type="sequence variant" id="VAR_071700" description="In CJS; dbSNP:rs149800897." evidence="10">
    <original>P</original>
    <variation>L</variation>
    <location>
        <position position="608"/>
    </location>
</feature>
<feature type="sequence variant" id="VAR_047305" description="In dbSNP:rs3099537.">
    <original>P</original>
    <variation>S</variation>
    <location>
        <position position="625"/>
    </location>
</feature>
<feature type="sequence variant" id="VAR_032976" description="In HPE9; uncertain significance; dbSNP:rs1272759660." evidence="7">
    <original>P</original>
    <variation>S</variation>
    <location>
        <position position="932"/>
    </location>
</feature>
<feature type="sequence variant" id="VAR_047306" description="In dbSNP:rs3738880." evidence="17">
    <original>A</original>
    <variation>S</variation>
    <location>
        <position position="1156"/>
    </location>
</feature>
<feature type="sequence variant" id="VAR_047307" description="In dbSNP:rs12711538." evidence="17">
    <original>D</original>
    <variation>N</variation>
    <location>
        <position position="1306"/>
    </location>
</feature>
<feature type="sequence variant" id="VAR_075215" description="Found in Culler-Jones syndrome; when associated in cis with N-1520; decreased transcription factor activity when associated in cis with N-1520; dbSNP:rs149140724." evidence="11 16">
    <original>M</original>
    <variation>V</variation>
    <location>
        <position position="1352"/>
    </location>
</feature>
<feature type="sequence variant" id="VAR_075216" description="In CJS; uncertain significance; decreased transcription factor activity." evidence="11">
    <original>ML</original>
    <variation>IF</variation>
    <location>
        <begin position="1444"/>
        <end position="1445"/>
    </location>
</feature>
<feature type="sequence variant" id="VAR_032977" description="In dbSNP:rs146467786." evidence="7 15">
    <original>M</original>
    <variation>I</variation>
    <location>
        <position position="1444"/>
    </location>
</feature>
<feature type="sequence variant" id="VAR_075217" description="Found in Culler-Jones syndrome; when associated in cis with V-1352 in Culler-Jones syndrome; decreased transcription factor activity when associated in cis with V-1352; dbSNP:rs114814747." evidence="11 16">
    <original>D</original>
    <variation>N</variation>
    <location>
        <position position="1520"/>
    </location>
</feature>
<feature type="sequence variant" id="VAR_075218" description="No effect on transcription factor activity; dbSNP:rs138987487." evidence="11">
    <original>R</original>
    <variation>H</variation>
    <location>
        <position position="1543"/>
    </location>
</feature>
<feature type="sequence variant" id="VAR_032978" description="In HPE9; uncertain significance; dbSNP:rs767802807." evidence="7">
    <original>P</original>
    <variation>L</variation>
    <location>
        <position position="1554"/>
    </location>
</feature>
<feature type="sequence conflict" description="In Ref. 5; M20672." evidence="21" ref="5">
    <original>H</original>
    <variation>Q</variation>
    <location>
        <position position="456"/>
    </location>
</feature>
<feature type="sequence conflict" description="In Ref. 4; BAA03568/BAA03569." evidence="21" ref="4">
    <original>QL</original>
    <variation>HV</variation>
    <location>
        <begin position="718"/>
        <end position="719"/>
    </location>
</feature>
<feature type="sequence conflict" description="In Ref. 1; BAA25665/BAA25667/BAA25666/BAA25668." evidence="21" ref="1">
    <original>PER</original>
    <variation>AEG</variation>
    <location>
        <begin position="923"/>
        <end position="925"/>
    </location>
</feature>
<feature type="sequence conflict" description="In Ref. 1; BAA25665/BAA25667/BAA25666/BAA25668." evidence="21" ref="1">
    <original>A</original>
    <variation>T</variation>
    <location>
        <position position="966"/>
    </location>
</feature>
<feature type="cross-link" description="Glycyl lysine isopeptide (Lys-Gly) (interchain with G-Cter in SUMO2)" evidence="26">
    <location sequence="P10070-2">
        <position position="50"/>
    </location>
</feature>
<feature type="cross-link" description="Glycyl lysine isopeptide (Lys-Gly) (interchain with G-Cter in SUMO2)" evidence="26">
    <location sequence="P10070-4">
        <position position="50"/>
    </location>
</feature>
<gene>
    <name evidence="23" type="primary">GLI2</name>
    <name evidence="20" type="synonym">THP</name>
</gene>